<sequence>MSITAERKQALIKEYATKEGDTGSPEVQVAVLSERIANLTEHFKGHKNDNHSRRGLLKLVSQRRRLLDYVKGVDHARYQALITRLGLRR</sequence>
<name>RS15_BRUO2</name>
<dbReference type="EMBL" id="CP000708">
    <property type="protein sequence ID" value="ABQ61513.1"/>
    <property type="status" value="ALT_INIT"/>
    <property type="molecule type" value="Genomic_DNA"/>
</dbReference>
<dbReference type="RefSeq" id="WP_002965230.1">
    <property type="nucleotide sequence ID" value="NC_009505.1"/>
</dbReference>
<dbReference type="SMR" id="A5VTB5"/>
<dbReference type="GeneID" id="97534579"/>
<dbReference type="KEGG" id="bov:BOV_2080"/>
<dbReference type="HOGENOM" id="CLU_148518_0_0_5"/>
<dbReference type="Proteomes" id="UP000006383">
    <property type="component" value="Chromosome I"/>
</dbReference>
<dbReference type="GO" id="GO:0022627">
    <property type="term" value="C:cytosolic small ribosomal subunit"/>
    <property type="evidence" value="ECO:0007669"/>
    <property type="project" value="TreeGrafter"/>
</dbReference>
<dbReference type="GO" id="GO:0019843">
    <property type="term" value="F:rRNA binding"/>
    <property type="evidence" value="ECO:0007669"/>
    <property type="project" value="UniProtKB-UniRule"/>
</dbReference>
<dbReference type="GO" id="GO:0003735">
    <property type="term" value="F:structural constituent of ribosome"/>
    <property type="evidence" value="ECO:0007669"/>
    <property type="project" value="InterPro"/>
</dbReference>
<dbReference type="GO" id="GO:0006412">
    <property type="term" value="P:translation"/>
    <property type="evidence" value="ECO:0007669"/>
    <property type="project" value="UniProtKB-UniRule"/>
</dbReference>
<dbReference type="CDD" id="cd00353">
    <property type="entry name" value="Ribosomal_S15p_S13e"/>
    <property type="match status" value="1"/>
</dbReference>
<dbReference type="FunFam" id="1.10.287.10:FF:000002">
    <property type="entry name" value="30S ribosomal protein S15"/>
    <property type="match status" value="1"/>
</dbReference>
<dbReference type="Gene3D" id="6.10.250.3130">
    <property type="match status" value="1"/>
</dbReference>
<dbReference type="Gene3D" id="1.10.287.10">
    <property type="entry name" value="S15/NS1, RNA-binding"/>
    <property type="match status" value="1"/>
</dbReference>
<dbReference type="HAMAP" id="MF_01343_B">
    <property type="entry name" value="Ribosomal_uS15_B"/>
    <property type="match status" value="1"/>
</dbReference>
<dbReference type="InterPro" id="IPR000589">
    <property type="entry name" value="Ribosomal_uS15"/>
</dbReference>
<dbReference type="InterPro" id="IPR005290">
    <property type="entry name" value="Ribosomal_uS15_bac-type"/>
</dbReference>
<dbReference type="InterPro" id="IPR009068">
    <property type="entry name" value="uS15_NS1_RNA-bd_sf"/>
</dbReference>
<dbReference type="NCBIfam" id="TIGR00952">
    <property type="entry name" value="S15_bact"/>
    <property type="match status" value="1"/>
</dbReference>
<dbReference type="PANTHER" id="PTHR23321">
    <property type="entry name" value="RIBOSOMAL PROTEIN S15, BACTERIAL AND ORGANELLAR"/>
    <property type="match status" value="1"/>
</dbReference>
<dbReference type="PANTHER" id="PTHR23321:SF26">
    <property type="entry name" value="SMALL RIBOSOMAL SUBUNIT PROTEIN US15M"/>
    <property type="match status" value="1"/>
</dbReference>
<dbReference type="Pfam" id="PF00312">
    <property type="entry name" value="Ribosomal_S15"/>
    <property type="match status" value="1"/>
</dbReference>
<dbReference type="SMART" id="SM01387">
    <property type="entry name" value="Ribosomal_S15"/>
    <property type="match status" value="1"/>
</dbReference>
<dbReference type="SUPFAM" id="SSF47060">
    <property type="entry name" value="S15/NS1 RNA-binding domain"/>
    <property type="match status" value="1"/>
</dbReference>
<dbReference type="PROSITE" id="PS00362">
    <property type="entry name" value="RIBOSOMAL_S15"/>
    <property type="match status" value="1"/>
</dbReference>
<accession>A5VTB5</accession>
<organism>
    <name type="scientific">Brucella ovis (strain ATCC 25840 / 63/290 / NCTC 10512)</name>
    <dbReference type="NCBI Taxonomy" id="444178"/>
    <lineage>
        <taxon>Bacteria</taxon>
        <taxon>Pseudomonadati</taxon>
        <taxon>Pseudomonadota</taxon>
        <taxon>Alphaproteobacteria</taxon>
        <taxon>Hyphomicrobiales</taxon>
        <taxon>Brucellaceae</taxon>
        <taxon>Brucella/Ochrobactrum group</taxon>
        <taxon>Brucella</taxon>
    </lineage>
</organism>
<reference key="1">
    <citation type="journal article" date="2009" name="PLoS ONE">
        <title>Genome degradation in Brucella ovis corresponds with narrowing of its host range and tissue tropism.</title>
        <authorList>
            <person name="Tsolis R.M."/>
            <person name="Seshadri R."/>
            <person name="Santos R.L."/>
            <person name="Sangari F.J."/>
            <person name="Lobo J.M."/>
            <person name="de Jong M.F."/>
            <person name="Ren Q."/>
            <person name="Myers G."/>
            <person name="Brinkac L.M."/>
            <person name="Nelson W.C."/>
            <person name="Deboy R.T."/>
            <person name="Angiuoli S."/>
            <person name="Khouri H."/>
            <person name="Dimitrov G."/>
            <person name="Robinson J.R."/>
            <person name="Mulligan S."/>
            <person name="Walker R.L."/>
            <person name="Elzer P.E."/>
            <person name="Hassan K.A."/>
            <person name="Paulsen I.T."/>
        </authorList>
    </citation>
    <scope>NUCLEOTIDE SEQUENCE [LARGE SCALE GENOMIC DNA]</scope>
    <source>
        <strain>ATCC 25840 / 63/290 / NCTC 10512</strain>
    </source>
</reference>
<evidence type="ECO:0000255" key="1">
    <source>
        <dbReference type="HAMAP-Rule" id="MF_01343"/>
    </source>
</evidence>
<evidence type="ECO:0000305" key="2"/>
<gene>
    <name evidence="1" type="primary">rpsO</name>
    <name type="ordered locus">BOV_2080</name>
</gene>
<keyword id="KW-0687">Ribonucleoprotein</keyword>
<keyword id="KW-0689">Ribosomal protein</keyword>
<keyword id="KW-0694">RNA-binding</keyword>
<keyword id="KW-0699">rRNA-binding</keyword>
<feature type="chain" id="PRO_0000354180" description="Small ribosomal subunit protein uS15">
    <location>
        <begin position="1"/>
        <end position="89"/>
    </location>
</feature>
<protein>
    <recommendedName>
        <fullName evidence="1">Small ribosomal subunit protein uS15</fullName>
    </recommendedName>
    <alternativeName>
        <fullName evidence="2">30S ribosomal protein S15</fullName>
    </alternativeName>
</protein>
<comment type="function">
    <text evidence="1">One of the primary rRNA binding proteins, it binds directly to 16S rRNA where it helps nucleate assembly of the platform of the 30S subunit by binding and bridging several RNA helices of the 16S rRNA.</text>
</comment>
<comment type="function">
    <text evidence="1">Forms an intersubunit bridge (bridge B4) with the 23S rRNA of the 50S subunit in the ribosome.</text>
</comment>
<comment type="subunit">
    <text evidence="1">Part of the 30S ribosomal subunit. Forms a bridge to the 50S subunit in the 70S ribosome, contacting the 23S rRNA.</text>
</comment>
<comment type="similarity">
    <text evidence="1">Belongs to the universal ribosomal protein uS15 family.</text>
</comment>
<comment type="sequence caution" evidence="2">
    <conflict type="erroneous initiation">
        <sequence resource="EMBL-CDS" id="ABQ61513"/>
    </conflict>
</comment>
<proteinExistence type="inferred from homology"/>